<name>GLUQ_AROAE</name>
<accession>Q5P2J9</accession>
<reference key="1">
    <citation type="journal article" date="2005" name="Arch. Microbiol.">
        <title>The genome sequence of an anaerobic aromatic-degrading denitrifying bacterium, strain EbN1.</title>
        <authorList>
            <person name="Rabus R."/>
            <person name="Kube M."/>
            <person name="Heider J."/>
            <person name="Beck A."/>
            <person name="Heitmann K."/>
            <person name="Widdel F."/>
            <person name="Reinhardt R."/>
        </authorList>
    </citation>
    <scope>NUCLEOTIDE SEQUENCE [LARGE SCALE GENOMIC DNA]</scope>
    <source>
        <strain>DSM 19018 / LMG 30748 / EbN1</strain>
    </source>
</reference>
<proteinExistence type="inferred from homology"/>
<keyword id="KW-0030">Aminoacyl-tRNA synthetase</keyword>
<keyword id="KW-0067">ATP-binding</keyword>
<keyword id="KW-0436">Ligase</keyword>
<keyword id="KW-0479">Metal-binding</keyword>
<keyword id="KW-0547">Nucleotide-binding</keyword>
<keyword id="KW-1185">Reference proteome</keyword>
<keyword id="KW-0862">Zinc</keyword>
<sequence length="315" mass="34003">MIDDAAPPYVGRFAPSPSGPLHFGSLVAAVGSFLDARAHHGQWRLRIEDVDTPRTVPGAAQDILATLERFGFEWDGKPVWQSARLDAYRDAFERLRAAGQVFPCACTRREMADSALARDGSRLYPGTCRNGLPPGRSAHAWRVRAHGRIAFADRIQGPQEEDLATEVGDYVVLRGDGQFAYQLAVVVDDAAAGVTDIVRGADLLGSTGRQIHLQHLLGYPTPAYAHLPVVVNTAGEKLSKQTLAAPVAALPPARALFAALTFLGQNPPPALGRASLRETWKWAVTHWSLVDVPRQLQAEAPGAFSARARENPSSL</sequence>
<organism>
    <name type="scientific">Aromatoleum aromaticum (strain DSM 19018 / LMG 30748 / EbN1)</name>
    <name type="common">Azoarcus sp. (strain EbN1)</name>
    <dbReference type="NCBI Taxonomy" id="76114"/>
    <lineage>
        <taxon>Bacteria</taxon>
        <taxon>Pseudomonadati</taxon>
        <taxon>Pseudomonadota</taxon>
        <taxon>Betaproteobacteria</taxon>
        <taxon>Rhodocyclales</taxon>
        <taxon>Rhodocyclaceae</taxon>
        <taxon>Aromatoleum</taxon>
    </lineage>
</organism>
<gene>
    <name evidence="1" type="primary">gluQ</name>
    <name type="ordered locus">AZOSEA23400</name>
    <name type="ORF">ebA4133</name>
</gene>
<protein>
    <recommendedName>
        <fullName evidence="1">Glutamyl-Q tRNA(Asp) synthetase</fullName>
        <shortName evidence="1">Glu-Q-RSs</shortName>
        <ecNumber evidence="1">6.1.1.-</ecNumber>
    </recommendedName>
</protein>
<evidence type="ECO:0000255" key="1">
    <source>
        <dbReference type="HAMAP-Rule" id="MF_01428"/>
    </source>
</evidence>
<dbReference type="EC" id="6.1.1.-" evidence="1"/>
<dbReference type="EMBL" id="CR555306">
    <property type="protein sequence ID" value="CAI08465.1"/>
    <property type="molecule type" value="Genomic_DNA"/>
</dbReference>
<dbReference type="RefSeq" id="WP_011238152.1">
    <property type="nucleotide sequence ID" value="NC_006513.1"/>
</dbReference>
<dbReference type="SMR" id="Q5P2J9"/>
<dbReference type="STRING" id="76114.ebA4133"/>
<dbReference type="KEGG" id="eba:ebA4133"/>
<dbReference type="eggNOG" id="COG0008">
    <property type="taxonomic scope" value="Bacteria"/>
</dbReference>
<dbReference type="HOGENOM" id="CLU_015768_0_1_4"/>
<dbReference type="OrthoDB" id="9807503at2"/>
<dbReference type="Proteomes" id="UP000006552">
    <property type="component" value="Chromosome"/>
</dbReference>
<dbReference type="GO" id="GO:0005829">
    <property type="term" value="C:cytosol"/>
    <property type="evidence" value="ECO:0007669"/>
    <property type="project" value="TreeGrafter"/>
</dbReference>
<dbReference type="GO" id="GO:0005524">
    <property type="term" value="F:ATP binding"/>
    <property type="evidence" value="ECO:0007669"/>
    <property type="project" value="UniProtKB-KW"/>
</dbReference>
<dbReference type="GO" id="GO:0004818">
    <property type="term" value="F:glutamate-tRNA ligase activity"/>
    <property type="evidence" value="ECO:0007669"/>
    <property type="project" value="TreeGrafter"/>
</dbReference>
<dbReference type="GO" id="GO:0008270">
    <property type="term" value="F:zinc ion binding"/>
    <property type="evidence" value="ECO:0007669"/>
    <property type="project" value="UniProtKB-UniRule"/>
</dbReference>
<dbReference type="GO" id="GO:0006424">
    <property type="term" value="P:glutamyl-tRNA aminoacylation"/>
    <property type="evidence" value="ECO:0007669"/>
    <property type="project" value="InterPro"/>
</dbReference>
<dbReference type="GO" id="GO:0006400">
    <property type="term" value="P:tRNA modification"/>
    <property type="evidence" value="ECO:0007669"/>
    <property type="project" value="InterPro"/>
</dbReference>
<dbReference type="FunFam" id="3.40.50.620:FF:000093">
    <property type="entry name" value="Glutamyl-Q tRNA(Asp) synthetase"/>
    <property type="match status" value="1"/>
</dbReference>
<dbReference type="Gene3D" id="3.40.50.620">
    <property type="entry name" value="HUPs"/>
    <property type="match status" value="1"/>
</dbReference>
<dbReference type="HAMAP" id="MF_01428">
    <property type="entry name" value="Glu_Q_tRNA_synth"/>
    <property type="match status" value="1"/>
</dbReference>
<dbReference type="InterPro" id="IPR022380">
    <property type="entry name" value="Glu-Q_tRNA(Asp)_Synthase"/>
</dbReference>
<dbReference type="InterPro" id="IPR000924">
    <property type="entry name" value="Glu/Gln-tRNA-synth"/>
</dbReference>
<dbReference type="InterPro" id="IPR020058">
    <property type="entry name" value="Glu/Gln-tRNA-synth_Ib_cat-dom"/>
</dbReference>
<dbReference type="InterPro" id="IPR049940">
    <property type="entry name" value="GluQ/Sye"/>
</dbReference>
<dbReference type="InterPro" id="IPR014729">
    <property type="entry name" value="Rossmann-like_a/b/a_fold"/>
</dbReference>
<dbReference type="NCBIfam" id="NF004313">
    <property type="entry name" value="PRK05710.1-2"/>
    <property type="match status" value="1"/>
</dbReference>
<dbReference type="NCBIfam" id="NF004314">
    <property type="entry name" value="PRK05710.1-3"/>
    <property type="match status" value="1"/>
</dbReference>
<dbReference type="NCBIfam" id="TIGR03838">
    <property type="entry name" value="queuosine_YadB"/>
    <property type="match status" value="1"/>
</dbReference>
<dbReference type="PANTHER" id="PTHR43311">
    <property type="entry name" value="GLUTAMATE--TRNA LIGASE"/>
    <property type="match status" value="1"/>
</dbReference>
<dbReference type="PANTHER" id="PTHR43311:SF1">
    <property type="entry name" value="GLUTAMYL-Q TRNA(ASP) SYNTHETASE"/>
    <property type="match status" value="1"/>
</dbReference>
<dbReference type="Pfam" id="PF00749">
    <property type="entry name" value="tRNA-synt_1c"/>
    <property type="match status" value="1"/>
</dbReference>
<dbReference type="PRINTS" id="PR00987">
    <property type="entry name" value="TRNASYNTHGLU"/>
</dbReference>
<dbReference type="SUPFAM" id="SSF52374">
    <property type="entry name" value="Nucleotidylyl transferase"/>
    <property type="match status" value="1"/>
</dbReference>
<feature type="chain" id="PRO_0000208285" description="Glutamyl-Q tRNA(Asp) synthetase">
    <location>
        <begin position="1"/>
        <end position="315"/>
    </location>
</feature>
<feature type="short sequence motif" description="'HIGH' region">
    <location>
        <begin position="15"/>
        <end position="25"/>
    </location>
</feature>
<feature type="short sequence motif" description="'KMSKS' region">
    <location>
        <begin position="237"/>
        <end position="241"/>
    </location>
</feature>
<feature type="binding site" evidence="1">
    <location>
        <begin position="12"/>
        <end position="16"/>
    </location>
    <ligand>
        <name>L-glutamate</name>
        <dbReference type="ChEBI" id="CHEBI:29985"/>
    </ligand>
</feature>
<feature type="binding site" evidence="1">
    <location>
        <position position="48"/>
    </location>
    <ligand>
        <name>L-glutamate</name>
        <dbReference type="ChEBI" id="CHEBI:29985"/>
    </ligand>
</feature>
<feature type="binding site" evidence="1">
    <location>
        <position position="104"/>
    </location>
    <ligand>
        <name>Zn(2+)</name>
        <dbReference type="ChEBI" id="CHEBI:29105"/>
    </ligand>
</feature>
<feature type="binding site" evidence="1">
    <location>
        <position position="106"/>
    </location>
    <ligand>
        <name>Zn(2+)</name>
        <dbReference type="ChEBI" id="CHEBI:29105"/>
    </ligand>
</feature>
<feature type="binding site" evidence="1">
    <location>
        <position position="124"/>
    </location>
    <ligand>
        <name>Zn(2+)</name>
        <dbReference type="ChEBI" id="CHEBI:29105"/>
    </ligand>
</feature>
<feature type="binding site" evidence="1">
    <location>
        <position position="128"/>
    </location>
    <ligand>
        <name>Zn(2+)</name>
        <dbReference type="ChEBI" id="CHEBI:29105"/>
    </ligand>
</feature>
<feature type="binding site" evidence="1">
    <location>
        <position position="181"/>
    </location>
    <ligand>
        <name>L-glutamate</name>
        <dbReference type="ChEBI" id="CHEBI:29985"/>
    </ligand>
</feature>
<feature type="binding site" evidence="1">
    <location>
        <position position="199"/>
    </location>
    <ligand>
        <name>L-glutamate</name>
        <dbReference type="ChEBI" id="CHEBI:29985"/>
    </ligand>
</feature>
<feature type="binding site" evidence="1">
    <location>
        <position position="240"/>
    </location>
    <ligand>
        <name>ATP</name>
        <dbReference type="ChEBI" id="CHEBI:30616"/>
    </ligand>
</feature>
<comment type="function">
    <text evidence="1">Catalyzes the tRNA-independent activation of glutamate in presence of ATP and the subsequent transfer of glutamate onto a tRNA(Asp). Glutamate is transferred on the 2-amino-5-(4,5-dihydroxy-2-cyclopenten-1-yl) moiety of the queuosine in the wobble position of the QUC anticodon.</text>
</comment>
<comment type="cofactor">
    <cofactor evidence="1">
        <name>Zn(2+)</name>
        <dbReference type="ChEBI" id="CHEBI:29105"/>
    </cofactor>
    <text evidence="1">Binds 1 zinc ion per subunit.</text>
</comment>
<comment type="similarity">
    <text evidence="1">Belongs to the class-I aminoacyl-tRNA synthetase family. GluQ subfamily.</text>
</comment>